<reference key="1">
    <citation type="journal article" date="1983" name="Nucleic Acids Res.">
        <title>Sequence of the C. elegans transposable element Tc1.</title>
        <authorList>
            <person name="Rosenzweig B."/>
            <person name="Liao L.W."/>
            <person name="Hirsh D."/>
        </authorList>
    </citation>
    <scope>NUCLEOTIDE SEQUENCE [GENOMIC DNA]</scope>
</reference>
<reference key="2">
    <citation type="journal article" date="1998" name="Science">
        <title>Genome sequence of the nematode C. elegans: a platform for investigating biology.</title>
        <authorList>
            <consortium name="The C. elegans sequencing consortium"/>
        </authorList>
    </citation>
    <scope>NUCLEOTIDE SEQUENCE [LARGE SCALE GENOMIC DNA]</scope>
    <source>
        <strain>Bristol N2</strain>
    </source>
</reference>
<reference key="3">
    <citation type="journal article" date="1990" name="Nucleic Acids Res.">
        <title>TcA, the putative transposase of the C. elegans Tc1 transposon, has an N-terminal DNA binding domain.</title>
        <authorList>
            <person name="Schukkink R.F."/>
            <person name="Plasterk R.H.A."/>
        </authorList>
    </citation>
    <scope>FUNCTION</scope>
    <scope>SUBCELLULAR LOCATION</scope>
</reference>
<reference key="4">
    <citation type="journal article" date="1994" name="EMBO J.">
        <title>Tc1 transposase of Caenorhabditis elegans is an endonuclease with a bipartite DNA binding domain.</title>
        <authorList>
            <person name="Vos J.C."/>
            <person name="Plasterk R.H.A."/>
        </authorList>
    </citation>
    <scope>FUNCTION</scope>
    <scope>SUBCELLULAR LOCATION</scope>
    <scope>MUTAGENESIS</scope>
</reference>
<sequence length="273" mass="31820">MDRNILRSAREDPHRTATDIQMIISSPNEPVPSKRTVRRRLQQAGLHGRKPVKKPFISKKNRMARVAWAKAHLRWGRQEWAKHIWSDESKFNLFGSDGNSWVRRPVGSRYSPKYQCPTVKHGGGSVMVWGCFTSTSMGPLRRIQSIMDRFQYENIFETTMRPWALQNVGRGFVFQQDNDPKHTSLHVRSWFQRRHVHLLDWPSQSPDLNPIEHLWEELERRLGGIRASNADAKFNQLENAWKAIPMSVIHKLIDSMPRRCQAVIDANGYATKY</sequence>
<name>TC1A_CAEEL</name>
<protein>
    <recommendedName>
        <fullName>Transposable element Tc1 transposase</fullName>
    </recommendedName>
</protein>
<comment type="function">
    <text evidence="1 2">Probably essential for transposable element Tc1 transposition. The insertion of Tc1 is the main cause of spontaneous mutations. It is an endonuclease which can produce a single strand nick at the 5'-end of the transposon.</text>
</comment>
<comment type="subcellular location">
    <subcellularLocation>
        <location evidence="1 2">Nucleus</location>
    </subcellularLocation>
</comment>
<comment type="miscellaneous">
    <text>The N-terminal region of Tc1 transposase has strong affinity for double and single-stranded DNA.</text>
</comment>
<comment type="similarity">
    <text evidence="3">Belongs to the transposase 5 family.</text>
</comment>
<comment type="caution">
    <text evidence="3">Some sequenced Tc1 elements display an extra base T that would give rise to another start point for Tc1 transposase. This could result in a protein of 335 AA instead of 273 AA (displayed).</text>
</comment>
<accession>P03934</accession>
<accession>Q23636</accession>
<gene>
    <name type="primary">tc1a</name>
    <name type="synonym">tca</name>
    <name type="ORF">T07D3.8</name>
</gene>
<proteinExistence type="inferred from homology"/>
<dbReference type="EMBL" id="X01005">
    <property type="protein sequence ID" value="CAA25498.1"/>
    <property type="molecule type" value="Genomic_DNA"/>
</dbReference>
<dbReference type="EMBL" id="FO081675">
    <property type="status" value="NOT_ANNOTATED_CDS"/>
    <property type="molecule type" value="Genomic_DNA"/>
</dbReference>
<dbReference type="PIR" id="A04520">
    <property type="entry name" value="QQKWTA"/>
</dbReference>
<dbReference type="SMR" id="P03934"/>
<dbReference type="InParanoid" id="P03934"/>
<dbReference type="Proteomes" id="UP000001940">
    <property type="component" value="Chromosome II"/>
</dbReference>
<dbReference type="GO" id="GO:0005634">
    <property type="term" value="C:nucleus"/>
    <property type="evidence" value="ECO:0007669"/>
    <property type="project" value="UniProtKB-SubCell"/>
</dbReference>
<dbReference type="GO" id="GO:0003677">
    <property type="term" value="F:DNA binding"/>
    <property type="evidence" value="ECO:0007669"/>
    <property type="project" value="UniProtKB-KW"/>
</dbReference>
<dbReference type="GO" id="GO:0004519">
    <property type="term" value="F:endonuclease activity"/>
    <property type="evidence" value="ECO:0007669"/>
    <property type="project" value="UniProtKB-KW"/>
</dbReference>
<dbReference type="GO" id="GO:0015074">
    <property type="term" value="P:DNA integration"/>
    <property type="evidence" value="ECO:0007669"/>
    <property type="project" value="UniProtKB-KW"/>
</dbReference>
<dbReference type="GO" id="GO:0006313">
    <property type="term" value="P:DNA transposition"/>
    <property type="evidence" value="ECO:0007669"/>
    <property type="project" value="InterPro"/>
</dbReference>
<dbReference type="Gene3D" id="3.30.420.10">
    <property type="entry name" value="Ribonuclease H-like superfamily/Ribonuclease H"/>
    <property type="match status" value="1"/>
</dbReference>
<dbReference type="InterPro" id="IPR036397">
    <property type="entry name" value="RNaseH_sf"/>
</dbReference>
<dbReference type="InterPro" id="IPR038717">
    <property type="entry name" value="Tc1-like_DDE_dom"/>
</dbReference>
<dbReference type="InterPro" id="IPR052338">
    <property type="entry name" value="Transposase_5"/>
</dbReference>
<dbReference type="InterPro" id="IPR002492">
    <property type="entry name" value="Transposase_Tc1-like"/>
</dbReference>
<dbReference type="PANTHER" id="PTHR23022:SF134">
    <property type="entry name" value="TRANSPOSABLE ELEMENT TC1 TRANSPOSASE"/>
    <property type="match status" value="1"/>
</dbReference>
<dbReference type="PANTHER" id="PTHR23022">
    <property type="entry name" value="TRANSPOSABLE ELEMENT-RELATED"/>
    <property type="match status" value="1"/>
</dbReference>
<dbReference type="Pfam" id="PF13358">
    <property type="entry name" value="DDE_3"/>
    <property type="match status" value="1"/>
</dbReference>
<dbReference type="Pfam" id="PF01498">
    <property type="entry name" value="HTH_Tnp_Tc3_2"/>
    <property type="match status" value="1"/>
</dbReference>
<keyword id="KW-0229">DNA integration</keyword>
<keyword id="KW-0233">DNA recombination</keyword>
<keyword id="KW-0238">DNA-binding</keyword>
<keyword id="KW-0255">Endonuclease</keyword>
<keyword id="KW-0378">Hydrolase</keyword>
<keyword id="KW-0540">Nuclease</keyword>
<keyword id="KW-0539">Nucleus</keyword>
<keyword id="KW-1185">Reference proteome</keyword>
<keyword id="KW-0814">Transposable element</keyword>
<evidence type="ECO:0000269" key="1">
    <source>
    </source>
</evidence>
<evidence type="ECO:0000269" key="2">
    <source>
    </source>
</evidence>
<evidence type="ECO:0000305" key="3"/>
<organism>
    <name type="scientific">Caenorhabditis elegans</name>
    <dbReference type="NCBI Taxonomy" id="6239"/>
    <lineage>
        <taxon>Eukaryota</taxon>
        <taxon>Metazoa</taxon>
        <taxon>Ecdysozoa</taxon>
        <taxon>Nematoda</taxon>
        <taxon>Chromadorea</taxon>
        <taxon>Rhabditida</taxon>
        <taxon>Rhabditina</taxon>
        <taxon>Rhabditomorpha</taxon>
        <taxon>Rhabditoidea</taxon>
        <taxon>Rhabditidae</taxon>
        <taxon>Peloderinae</taxon>
        <taxon>Caenorhabditis</taxon>
    </lineage>
</organism>
<feature type="chain" id="PRO_0000072444" description="Transposable element Tc1 transposase">
    <location>
        <begin position="1"/>
        <end position="273"/>
    </location>
</feature>